<name>F110C_MOUSE</name>
<gene>
    <name type="primary">Fam110c</name>
</gene>
<feature type="chain" id="PRO_0000293462" description="Protein FAM110C">
    <location>
        <begin position="1"/>
        <end position="421"/>
    </location>
</feature>
<feature type="region of interest" description="Disordered" evidence="2">
    <location>
        <begin position="1"/>
        <end position="36"/>
    </location>
</feature>
<feature type="region of interest" description="Disordered" evidence="2">
    <location>
        <begin position="51"/>
        <end position="80"/>
    </location>
</feature>
<feature type="region of interest" description="Disordered" evidence="2">
    <location>
        <begin position="141"/>
        <end position="266"/>
    </location>
</feature>
<feature type="compositionally biased region" description="Basic and acidic residues" evidence="2">
    <location>
        <begin position="143"/>
        <end position="155"/>
    </location>
</feature>
<feature type="compositionally biased region" description="Basic and acidic residues" evidence="2">
    <location>
        <begin position="185"/>
        <end position="202"/>
    </location>
</feature>
<feature type="compositionally biased region" description="Basic and acidic residues" evidence="2">
    <location>
        <begin position="232"/>
        <end position="249"/>
    </location>
</feature>
<feature type="modified residue" description="Phosphoserine" evidence="4">
    <location>
        <position position="350"/>
    </location>
</feature>
<feature type="sequence conflict" description="In Ref. 1; BAB31266." evidence="3" ref="1">
    <original>F</original>
    <variation>L</variation>
    <location>
        <position position="327"/>
    </location>
</feature>
<comment type="function">
    <text evidence="1">May play a role in microtubule organization. May play a role in cell spreading and cell migration of epithelial cells; the function may involve the AKT1 signaling pathway.</text>
</comment>
<comment type="subunit">
    <text evidence="1">Interacts with AKT1; the interaction is transient and follows AKT1 activation. Interacts with PPP2CA and alpha-tubulin.</text>
</comment>
<comment type="subcellular location">
    <subcellularLocation>
        <location evidence="1">Cytoplasm</location>
        <location evidence="1">Cytoskeleton</location>
    </subcellularLocation>
    <subcellularLocation>
        <location evidence="1">Cytoplasm</location>
        <location evidence="1">Cytoskeleton</location>
        <location evidence="1">Microtubule organizing center</location>
        <location evidence="1">Centrosome</location>
    </subcellularLocation>
    <subcellularLocation>
        <location evidence="1">Cytoplasm</location>
        <location evidence="1">Cytoskeleton</location>
        <location evidence="1">Spindle pole</location>
    </subcellularLocation>
    <subcellularLocation>
        <location evidence="1">Nucleus</location>
    </subcellularLocation>
    <text evidence="1">Colocalizes with microtubules during interphase. Detected at the mitotic spindle poles. Colocalizes with AKT1 at the cell cortex.</text>
</comment>
<comment type="similarity">
    <text evidence="3">Belongs to the FAM110 family.</text>
</comment>
<keyword id="KW-0963">Cytoplasm</keyword>
<keyword id="KW-0206">Cytoskeleton</keyword>
<keyword id="KW-0493">Microtubule</keyword>
<keyword id="KW-0539">Nucleus</keyword>
<keyword id="KW-0597">Phosphoprotein</keyword>
<keyword id="KW-1185">Reference proteome</keyword>
<protein>
    <recommendedName>
        <fullName>Protein FAM110C</fullName>
    </recommendedName>
</protein>
<dbReference type="EMBL" id="AK018545">
    <property type="protein sequence ID" value="BAB31266.1"/>
    <property type="molecule type" value="mRNA"/>
</dbReference>
<dbReference type="EMBL" id="AK160079">
    <property type="protein sequence ID" value="BAE35611.1"/>
    <property type="molecule type" value="mRNA"/>
</dbReference>
<dbReference type="EMBL" id="BC019466">
    <property type="protein sequence ID" value="AAH19466.1"/>
    <property type="molecule type" value="mRNA"/>
</dbReference>
<dbReference type="EMBL" id="BC085288">
    <property type="protein sequence ID" value="AAH85288.1"/>
    <property type="molecule type" value="mRNA"/>
</dbReference>
<dbReference type="CCDS" id="CCDS25860.1"/>
<dbReference type="RefSeq" id="NP_082104.2">
    <property type="nucleotide sequence ID" value="NM_027828.2"/>
</dbReference>
<dbReference type="SMR" id="Q8VE94"/>
<dbReference type="FunCoup" id="Q8VE94">
    <property type="interactions" value="117"/>
</dbReference>
<dbReference type="STRING" id="10090.ENSMUSP00000041563"/>
<dbReference type="GlyGen" id="Q8VE94">
    <property type="glycosylation" value="3 sites"/>
</dbReference>
<dbReference type="iPTMnet" id="Q8VE94"/>
<dbReference type="PhosphoSitePlus" id="Q8VE94"/>
<dbReference type="jPOST" id="Q8VE94"/>
<dbReference type="PaxDb" id="10090-ENSMUSP00000041563"/>
<dbReference type="ProteomicsDB" id="275957"/>
<dbReference type="Antibodypedia" id="49861">
    <property type="antibodies" value="25 antibodies from 9 providers"/>
</dbReference>
<dbReference type="Ensembl" id="ENSMUST00000041133.10">
    <property type="protein sequence ID" value="ENSMUSP00000041563.9"/>
    <property type="gene ID" value="ENSMUSG00000036136.10"/>
</dbReference>
<dbReference type="GeneID" id="104943"/>
<dbReference type="KEGG" id="mmu:104943"/>
<dbReference type="UCSC" id="uc007nhb.1">
    <property type="organism name" value="mouse"/>
</dbReference>
<dbReference type="AGR" id="MGI:1918813"/>
<dbReference type="CTD" id="642273"/>
<dbReference type="MGI" id="MGI:1918813">
    <property type="gene designation" value="Fam110c"/>
</dbReference>
<dbReference type="VEuPathDB" id="HostDB:ENSMUSG00000036136"/>
<dbReference type="eggNOG" id="ENOG502S0DB">
    <property type="taxonomic scope" value="Eukaryota"/>
</dbReference>
<dbReference type="GeneTree" id="ENSGT00950000183056"/>
<dbReference type="HOGENOM" id="CLU_050540_0_0_1"/>
<dbReference type="InParanoid" id="Q8VE94"/>
<dbReference type="OMA" id="YCGLEQE"/>
<dbReference type="OrthoDB" id="10028183at2759"/>
<dbReference type="PhylomeDB" id="Q8VE94"/>
<dbReference type="TreeFam" id="TF330964"/>
<dbReference type="BioGRID-ORCS" id="104943">
    <property type="hits" value="1 hit in 78 CRISPR screens"/>
</dbReference>
<dbReference type="ChiTaRS" id="Fam110c">
    <property type="organism name" value="mouse"/>
</dbReference>
<dbReference type="PRO" id="PR:Q8VE94"/>
<dbReference type="Proteomes" id="UP000000589">
    <property type="component" value="Chromosome 12"/>
</dbReference>
<dbReference type="RNAct" id="Q8VE94">
    <property type="molecule type" value="protein"/>
</dbReference>
<dbReference type="Bgee" id="ENSMUSG00000036136">
    <property type="expression patterns" value="Expressed in primary oocyte and 109 other cell types or tissues"/>
</dbReference>
<dbReference type="GO" id="GO:0005938">
    <property type="term" value="C:cell cortex"/>
    <property type="evidence" value="ECO:0000250"/>
    <property type="project" value="UniProtKB"/>
</dbReference>
<dbReference type="GO" id="GO:0005813">
    <property type="term" value="C:centrosome"/>
    <property type="evidence" value="ECO:0007669"/>
    <property type="project" value="UniProtKB-SubCell"/>
</dbReference>
<dbReference type="GO" id="GO:0005874">
    <property type="term" value="C:microtubule"/>
    <property type="evidence" value="ECO:0007669"/>
    <property type="project" value="UniProtKB-KW"/>
</dbReference>
<dbReference type="GO" id="GO:0005634">
    <property type="term" value="C:nucleus"/>
    <property type="evidence" value="ECO:0007669"/>
    <property type="project" value="UniProtKB-SubCell"/>
</dbReference>
<dbReference type="GO" id="GO:0000922">
    <property type="term" value="C:spindle pole"/>
    <property type="evidence" value="ECO:0007669"/>
    <property type="project" value="UniProtKB-SubCell"/>
</dbReference>
<dbReference type="GO" id="GO:0043014">
    <property type="term" value="F:alpha-tubulin binding"/>
    <property type="evidence" value="ECO:0000250"/>
    <property type="project" value="UniProtKB"/>
</dbReference>
<dbReference type="GO" id="GO:0030335">
    <property type="term" value="P:positive regulation of cell migration"/>
    <property type="evidence" value="ECO:0000250"/>
    <property type="project" value="UniProtKB"/>
</dbReference>
<dbReference type="GO" id="GO:0051897">
    <property type="term" value="P:positive regulation of phosphatidylinositol 3-kinase/protein kinase B signal transduction"/>
    <property type="evidence" value="ECO:0000250"/>
    <property type="project" value="UniProtKB"/>
</dbReference>
<dbReference type="GO" id="GO:0060491">
    <property type="term" value="P:regulation of cell projection assembly"/>
    <property type="evidence" value="ECO:0000250"/>
    <property type="project" value="UniProtKB"/>
</dbReference>
<dbReference type="InterPro" id="IPR025740">
    <property type="entry name" value="FAM110"/>
</dbReference>
<dbReference type="InterPro" id="IPR025741">
    <property type="entry name" value="FAM110_C"/>
</dbReference>
<dbReference type="PANTHER" id="PTHR14758">
    <property type="entry name" value="AGAP005440-PA"/>
    <property type="match status" value="1"/>
</dbReference>
<dbReference type="PANTHER" id="PTHR14758:SF5">
    <property type="entry name" value="PROTEIN FAM110C"/>
    <property type="match status" value="1"/>
</dbReference>
<dbReference type="Pfam" id="PF14160">
    <property type="entry name" value="FAM110_C"/>
    <property type="match status" value="1"/>
</dbReference>
<organism>
    <name type="scientific">Mus musculus</name>
    <name type="common">Mouse</name>
    <dbReference type="NCBI Taxonomy" id="10090"/>
    <lineage>
        <taxon>Eukaryota</taxon>
        <taxon>Metazoa</taxon>
        <taxon>Chordata</taxon>
        <taxon>Craniata</taxon>
        <taxon>Vertebrata</taxon>
        <taxon>Euteleostomi</taxon>
        <taxon>Mammalia</taxon>
        <taxon>Eutheria</taxon>
        <taxon>Euarchontoglires</taxon>
        <taxon>Glires</taxon>
        <taxon>Rodentia</taxon>
        <taxon>Myomorpha</taxon>
        <taxon>Muroidea</taxon>
        <taxon>Muridae</taxon>
        <taxon>Murinae</taxon>
        <taxon>Mus</taxon>
        <taxon>Mus</taxon>
    </lineage>
</organism>
<reference key="1">
    <citation type="journal article" date="2005" name="Science">
        <title>The transcriptional landscape of the mammalian genome.</title>
        <authorList>
            <person name="Carninci P."/>
            <person name="Kasukawa T."/>
            <person name="Katayama S."/>
            <person name="Gough J."/>
            <person name="Frith M.C."/>
            <person name="Maeda N."/>
            <person name="Oyama R."/>
            <person name="Ravasi T."/>
            <person name="Lenhard B."/>
            <person name="Wells C."/>
            <person name="Kodzius R."/>
            <person name="Shimokawa K."/>
            <person name="Bajic V.B."/>
            <person name="Brenner S.E."/>
            <person name="Batalov S."/>
            <person name="Forrest A.R."/>
            <person name="Zavolan M."/>
            <person name="Davis M.J."/>
            <person name="Wilming L.G."/>
            <person name="Aidinis V."/>
            <person name="Allen J.E."/>
            <person name="Ambesi-Impiombato A."/>
            <person name="Apweiler R."/>
            <person name="Aturaliya R.N."/>
            <person name="Bailey T.L."/>
            <person name="Bansal M."/>
            <person name="Baxter L."/>
            <person name="Beisel K.W."/>
            <person name="Bersano T."/>
            <person name="Bono H."/>
            <person name="Chalk A.M."/>
            <person name="Chiu K.P."/>
            <person name="Choudhary V."/>
            <person name="Christoffels A."/>
            <person name="Clutterbuck D.R."/>
            <person name="Crowe M.L."/>
            <person name="Dalla E."/>
            <person name="Dalrymple B.P."/>
            <person name="de Bono B."/>
            <person name="Della Gatta G."/>
            <person name="di Bernardo D."/>
            <person name="Down T."/>
            <person name="Engstrom P."/>
            <person name="Fagiolini M."/>
            <person name="Faulkner G."/>
            <person name="Fletcher C.F."/>
            <person name="Fukushima T."/>
            <person name="Furuno M."/>
            <person name="Futaki S."/>
            <person name="Gariboldi M."/>
            <person name="Georgii-Hemming P."/>
            <person name="Gingeras T.R."/>
            <person name="Gojobori T."/>
            <person name="Green R.E."/>
            <person name="Gustincich S."/>
            <person name="Harbers M."/>
            <person name="Hayashi Y."/>
            <person name="Hensch T.K."/>
            <person name="Hirokawa N."/>
            <person name="Hill D."/>
            <person name="Huminiecki L."/>
            <person name="Iacono M."/>
            <person name="Ikeo K."/>
            <person name="Iwama A."/>
            <person name="Ishikawa T."/>
            <person name="Jakt M."/>
            <person name="Kanapin A."/>
            <person name="Katoh M."/>
            <person name="Kawasawa Y."/>
            <person name="Kelso J."/>
            <person name="Kitamura H."/>
            <person name="Kitano H."/>
            <person name="Kollias G."/>
            <person name="Krishnan S.P."/>
            <person name="Kruger A."/>
            <person name="Kummerfeld S.K."/>
            <person name="Kurochkin I.V."/>
            <person name="Lareau L.F."/>
            <person name="Lazarevic D."/>
            <person name="Lipovich L."/>
            <person name="Liu J."/>
            <person name="Liuni S."/>
            <person name="McWilliam S."/>
            <person name="Madan Babu M."/>
            <person name="Madera M."/>
            <person name="Marchionni L."/>
            <person name="Matsuda H."/>
            <person name="Matsuzawa S."/>
            <person name="Miki H."/>
            <person name="Mignone F."/>
            <person name="Miyake S."/>
            <person name="Morris K."/>
            <person name="Mottagui-Tabar S."/>
            <person name="Mulder N."/>
            <person name="Nakano N."/>
            <person name="Nakauchi H."/>
            <person name="Ng P."/>
            <person name="Nilsson R."/>
            <person name="Nishiguchi S."/>
            <person name="Nishikawa S."/>
            <person name="Nori F."/>
            <person name="Ohara O."/>
            <person name="Okazaki Y."/>
            <person name="Orlando V."/>
            <person name="Pang K.C."/>
            <person name="Pavan W.J."/>
            <person name="Pavesi G."/>
            <person name="Pesole G."/>
            <person name="Petrovsky N."/>
            <person name="Piazza S."/>
            <person name="Reed J."/>
            <person name="Reid J.F."/>
            <person name="Ring B.Z."/>
            <person name="Ringwald M."/>
            <person name="Rost B."/>
            <person name="Ruan Y."/>
            <person name="Salzberg S.L."/>
            <person name="Sandelin A."/>
            <person name="Schneider C."/>
            <person name="Schoenbach C."/>
            <person name="Sekiguchi K."/>
            <person name="Semple C.A."/>
            <person name="Seno S."/>
            <person name="Sessa L."/>
            <person name="Sheng Y."/>
            <person name="Shibata Y."/>
            <person name="Shimada H."/>
            <person name="Shimada K."/>
            <person name="Silva D."/>
            <person name="Sinclair B."/>
            <person name="Sperling S."/>
            <person name="Stupka E."/>
            <person name="Sugiura K."/>
            <person name="Sultana R."/>
            <person name="Takenaka Y."/>
            <person name="Taki K."/>
            <person name="Tammoja K."/>
            <person name="Tan S.L."/>
            <person name="Tang S."/>
            <person name="Taylor M.S."/>
            <person name="Tegner J."/>
            <person name="Teichmann S.A."/>
            <person name="Ueda H.R."/>
            <person name="van Nimwegen E."/>
            <person name="Verardo R."/>
            <person name="Wei C.L."/>
            <person name="Yagi K."/>
            <person name="Yamanishi H."/>
            <person name="Zabarovsky E."/>
            <person name="Zhu S."/>
            <person name="Zimmer A."/>
            <person name="Hide W."/>
            <person name="Bult C."/>
            <person name="Grimmond S.M."/>
            <person name="Teasdale R.D."/>
            <person name="Liu E.T."/>
            <person name="Brusic V."/>
            <person name="Quackenbush J."/>
            <person name="Wahlestedt C."/>
            <person name="Mattick J.S."/>
            <person name="Hume D.A."/>
            <person name="Kai C."/>
            <person name="Sasaki D."/>
            <person name="Tomaru Y."/>
            <person name="Fukuda S."/>
            <person name="Kanamori-Katayama M."/>
            <person name="Suzuki M."/>
            <person name="Aoki J."/>
            <person name="Arakawa T."/>
            <person name="Iida J."/>
            <person name="Imamura K."/>
            <person name="Itoh M."/>
            <person name="Kato T."/>
            <person name="Kawaji H."/>
            <person name="Kawagashira N."/>
            <person name="Kawashima T."/>
            <person name="Kojima M."/>
            <person name="Kondo S."/>
            <person name="Konno H."/>
            <person name="Nakano K."/>
            <person name="Ninomiya N."/>
            <person name="Nishio T."/>
            <person name="Okada M."/>
            <person name="Plessy C."/>
            <person name="Shibata K."/>
            <person name="Shiraki T."/>
            <person name="Suzuki S."/>
            <person name="Tagami M."/>
            <person name="Waki K."/>
            <person name="Watahiki A."/>
            <person name="Okamura-Oho Y."/>
            <person name="Suzuki H."/>
            <person name="Kawai J."/>
            <person name="Hayashizaki Y."/>
        </authorList>
    </citation>
    <scope>NUCLEOTIDE SEQUENCE [LARGE SCALE MRNA]</scope>
    <source>
        <strain>C57BL/6J</strain>
        <tissue>Colon</tissue>
    </source>
</reference>
<reference key="2">
    <citation type="journal article" date="2004" name="Genome Res.">
        <title>The status, quality, and expansion of the NIH full-length cDNA project: the Mammalian Gene Collection (MGC).</title>
        <authorList>
            <consortium name="The MGC Project Team"/>
        </authorList>
    </citation>
    <scope>NUCLEOTIDE SEQUENCE [LARGE SCALE MRNA]</scope>
    <source>
        <strain>FVB/N</strain>
        <tissue>Mammary tumor</tissue>
    </source>
</reference>
<reference key="3">
    <citation type="journal article" date="2010" name="Cell">
        <title>A tissue-specific atlas of mouse protein phosphorylation and expression.</title>
        <authorList>
            <person name="Huttlin E.L."/>
            <person name="Jedrychowski M.P."/>
            <person name="Elias J.E."/>
            <person name="Goswami T."/>
            <person name="Rad R."/>
            <person name="Beausoleil S.A."/>
            <person name="Villen J."/>
            <person name="Haas W."/>
            <person name="Sowa M.E."/>
            <person name="Gygi S.P."/>
        </authorList>
    </citation>
    <scope>PHOSPHORYLATION [LARGE SCALE ANALYSIS] AT SER-350</scope>
    <scope>IDENTIFICATION BY MASS SPECTROMETRY [LARGE SCALE ANALYSIS]</scope>
    <source>
        <tissue>Kidney</tissue>
        <tissue>Pancreas</tissue>
    </source>
</reference>
<sequence length="421" mass="45319">MRALPTLDSLARMRPPLGDPRAAEDTLTPRPANKSAVERLAADRAKYVRSTLGSSRGPVSEHRVPEAPGVQHRNPIPSALAPAPVARRAIARKPLRPDSLVIYRQKCEFVRGSDADCSRVGLMKKFFQGSGKDKMAVAPETTRVADEDKTTKETEATWTKSSQAAAARPASMLPPPTPVVAVKSPAEKTRVANEDKTTKETEATWTKSSQAAAARPASMLPPPTPVVAVKSPAEKTRVANEDKTTKETEATWTKSSQAAATRPASMLPPPTPVVAVKSPALPFEVAPRVPVGCSGVQLRVSRSKGLQRSQSDLSSRYSIAKAESDTFFKYCGLDPDVVEALGRENFSAGSDCVTLKVRSVSMAASDSSFSRHSEDGLQEEELLEQVPSTTSVVERNARIIKWLFTCKKAKETPSQKLQGPA</sequence>
<evidence type="ECO:0000250" key="1">
    <source>
        <dbReference type="UniProtKB" id="Q1W6H9"/>
    </source>
</evidence>
<evidence type="ECO:0000256" key="2">
    <source>
        <dbReference type="SAM" id="MobiDB-lite"/>
    </source>
</evidence>
<evidence type="ECO:0000305" key="3"/>
<evidence type="ECO:0007744" key="4">
    <source>
    </source>
</evidence>
<accession>Q8VE94</accession>
<accession>Q9D322</accession>
<proteinExistence type="evidence at protein level"/>